<accession>B5R2U7</accession>
<proteinExistence type="inferred from homology"/>
<feature type="chain" id="PRO_1000127055" description="UPF0181 protein YoaH">
    <location>
        <begin position="1"/>
        <end position="59"/>
    </location>
</feature>
<gene>
    <name evidence="1" type="primary">yoaH</name>
    <name type="ordered locus">SEN1214</name>
</gene>
<name>YOAH_SALEP</name>
<reference key="1">
    <citation type="journal article" date="2008" name="Genome Res.">
        <title>Comparative genome analysis of Salmonella enteritidis PT4 and Salmonella gallinarum 287/91 provides insights into evolutionary and host adaptation pathways.</title>
        <authorList>
            <person name="Thomson N.R."/>
            <person name="Clayton D.J."/>
            <person name="Windhorst D."/>
            <person name="Vernikos G."/>
            <person name="Davidson S."/>
            <person name="Churcher C."/>
            <person name="Quail M.A."/>
            <person name="Stevens M."/>
            <person name="Jones M.A."/>
            <person name="Watson M."/>
            <person name="Barron A."/>
            <person name="Layton A."/>
            <person name="Pickard D."/>
            <person name="Kingsley R.A."/>
            <person name="Bignell A."/>
            <person name="Clark L."/>
            <person name="Harris B."/>
            <person name="Ormond D."/>
            <person name="Abdellah Z."/>
            <person name="Brooks K."/>
            <person name="Cherevach I."/>
            <person name="Chillingworth T."/>
            <person name="Woodward J."/>
            <person name="Norberczak H."/>
            <person name="Lord A."/>
            <person name="Arrowsmith C."/>
            <person name="Jagels K."/>
            <person name="Moule S."/>
            <person name="Mungall K."/>
            <person name="Saunders M."/>
            <person name="Whitehead S."/>
            <person name="Chabalgoity J.A."/>
            <person name="Maskell D."/>
            <person name="Humphreys T."/>
            <person name="Roberts M."/>
            <person name="Barrow P.A."/>
            <person name="Dougan G."/>
            <person name="Parkhill J."/>
        </authorList>
    </citation>
    <scope>NUCLEOTIDE SEQUENCE [LARGE SCALE GENOMIC DNA]</scope>
    <source>
        <strain>P125109</strain>
    </source>
</reference>
<dbReference type="EMBL" id="AM933172">
    <property type="protein sequence ID" value="CAR32794.1"/>
    <property type="molecule type" value="Genomic_DNA"/>
</dbReference>
<dbReference type="RefSeq" id="WP_000457328.1">
    <property type="nucleotide sequence ID" value="NC_011294.1"/>
</dbReference>
<dbReference type="SMR" id="B5R2U7"/>
<dbReference type="KEGG" id="set:SEN1214"/>
<dbReference type="HOGENOM" id="CLU_185263_0_0_6"/>
<dbReference type="Proteomes" id="UP000000613">
    <property type="component" value="Chromosome"/>
</dbReference>
<dbReference type="HAMAP" id="MF_00507">
    <property type="entry name" value="UPF0181"/>
    <property type="match status" value="1"/>
</dbReference>
<dbReference type="InterPro" id="IPR005371">
    <property type="entry name" value="UPF0181"/>
</dbReference>
<dbReference type="NCBIfam" id="NF003476">
    <property type="entry name" value="PRK05114.1"/>
    <property type="match status" value="1"/>
</dbReference>
<dbReference type="Pfam" id="PF03701">
    <property type="entry name" value="UPF0181"/>
    <property type="match status" value="1"/>
</dbReference>
<comment type="similarity">
    <text evidence="1">Belongs to the UPF0181 family.</text>
</comment>
<protein>
    <recommendedName>
        <fullName evidence="1">UPF0181 protein YoaH</fullName>
    </recommendedName>
</protein>
<organism>
    <name type="scientific">Salmonella enteritidis PT4 (strain P125109)</name>
    <dbReference type="NCBI Taxonomy" id="550537"/>
    <lineage>
        <taxon>Bacteria</taxon>
        <taxon>Pseudomonadati</taxon>
        <taxon>Pseudomonadota</taxon>
        <taxon>Gammaproteobacteria</taxon>
        <taxon>Enterobacterales</taxon>
        <taxon>Enterobacteriaceae</taxon>
        <taxon>Salmonella</taxon>
    </lineage>
</organism>
<sequence length="59" mass="6514">MFAGLPSLSHEQQQKAVERIQELMSQGMSSGEAIAQVAGELRANHTGERIVARFEDEDE</sequence>
<evidence type="ECO:0000255" key="1">
    <source>
        <dbReference type="HAMAP-Rule" id="MF_00507"/>
    </source>
</evidence>